<feature type="chain" id="PRO_1000006572" description="Cysteine--tRNA ligase">
    <location>
        <begin position="1"/>
        <end position="465"/>
    </location>
</feature>
<feature type="short sequence motif" description="'HIGH' region">
    <location>
        <begin position="32"/>
        <end position="42"/>
    </location>
</feature>
<feature type="short sequence motif" description="'KMSKS' region">
    <location>
        <begin position="271"/>
        <end position="275"/>
    </location>
</feature>
<feature type="binding site" evidence="1">
    <location>
        <position position="30"/>
    </location>
    <ligand>
        <name>Zn(2+)</name>
        <dbReference type="ChEBI" id="CHEBI:29105"/>
    </ligand>
</feature>
<feature type="binding site" evidence="1">
    <location>
        <position position="214"/>
    </location>
    <ligand>
        <name>Zn(2+)</name>
        <dbReference type="ChEBI" id="CHEBI:29105"/>
    </ligand>
</feature>
<feature type="binding site" evidence="1">
    <location>
        <position position="239"/>
    </location>
    <ligand>
        <name>Zn(2+)</name>
        <dbReference type="ChEBI" id="CHEBI:29105"/>
    </ligand>
</feature>
<feature type="binding site" evidence="1">
    <location>
        <position position="243"/>
    </location>
    <ligand>
        <name>Zn(2+)</name>
        <dbReference type="ChEBI" id="CHEBI:29105"/>
    </ligand>
</feature>
<feature type="binding site" evidence="1">
    <location>
        <position position="274"/>
    </location>
    <ligand>
        <name>ATP</name>
        <dbReference type="ChEBI" id="CHEBI:30616"/>
    </ligand>
</feature>
<gene>
    <name evidence="1" type="primary">cysS</name>
    <name type="ordered locus">BURPS668_2545</name>
</gene>
<sequence>MESLRIYNTLARDKQDFVPRQPGEVRMYVCGITVYDYCHIGHARMVVVFDIVQRWLRARGYRVTYVRNITDIDDKIIRRAVENGETIQSLTRRFTDAMNADFDALGVERPDLEPRATEFIPQMLGMIEKLEANGYAYQAKDGDVNYSVRKFANYGRLSGKSLEDLRAGERVAANDAKEDPLDFVLWKRAKPQEPAGASWESKYGAGRPGWHIECSAMGCTLLGAHFDIHGGGQDLQFPHHENEIAQSEGATGQTFVNYWMHNGFVQVDSEKMSKSLGNFFTIREVLEKFDAEVVRFFIVRTHYRSPLNYSDVHLDDARASLTRLYTALKDATPDAQPLDWSEAHAQRFAAAMNDDFNTAVAVAVLFELATEVNRTREPALARQLRLLAGLLGLLGREPREFLQHAAGAARTGALEPHEIEARIAARVAAKQAKNYAEADRIRAELLEAGIALEDKPGGSTEWRRV</sequence>
<name>SYC_BURP6</name>
<reference key="1">
    <citation type="journal article" date="2010" name="Genome Biol. Evol.">
        <title>Continuing evolution of Burkholderia mallei through genome reduction and large-scale rearrangements.</title>
        <authorList>
            <person name="Losada L."/>
            <person name="Ronning C.M."/>
            <person name="DeShazer D."/>
            <person name="Woods D."/>
            <person name="Fedorova N."/>
            <person name="Kim H.S."/>
            <person name="Shabalina S.A."/>
            <person name="Pearson T.R."/>
            <person name="Brinkac L."/>
            <person name="Tan P."/>
            <person name="Nandi T."/>
            <person name="Crabtree J."/>
            <person name="Badger J."/>
            <person name="Beckstrom-Sternberg S."/>
            <person name="Saqib M."/>
            <person name="Schutzer S.E."/>
            <person name="Keim P."/>
            <person name="Nierman W.C."/>
        </authorList>
    </citation>
    <scope>NUCLEOTIDE SEQUENCE [LARGE SCALE GENOMIC DNA]</scope>
    <source>
        <strain>668</strain>
    </source>
</reference>
<protein>
    <recommendedName>
        <fullName evidence="1">Cysteine--tRNA ligase</fullName>
        <ecNumber evidence="1">6.1.1.16</ecNumber>
    </recommendedName>
    <alternativeName>
        <fullName evidence="1">Cysteinyl-tRNA synthetase</fullName>
        <shortName evidence="1">CysRS</shortName>
    </alternativeName>
</protein>
<dbReference type="EC" id="6.1.1.16" evidence="1"/>
<dbReference type="EMBL" id="CP000570">
    <property type="protein sequence ID" value="ABN84733.1"/>
    <property type="molecule type" value="Genomic_DNA"/>
</dbReference>
<dbReference type="RefSeq" id="WP_004192752.1">
    <property type="nucleotide sequence ID" value="NC_009074.1"/>
</dbReference>
<dbReference type="SMR" id="A3NB50"/>
<dbReference type="GeneID" id="93060794"/>
<dbReference type="KEGG" id="bpd:BURPS668_2545"/>
<dbReference type="HOGENOM" id="CLU_013528_0_2_4"/>
<dbReference type="GO" id="GO:0005829">
    <property type="term" value="C:cytosol"/>
    <property type="evidence" value="ECO:0007669"/>
    <property type="project" value="TreeGrafter"/>
</dbReference>
<dbReference type="GO" id="GO:0005524">
    <property type="term" value="F:ATP binding"/>
    <property type="evidence" value="ECO:0007669"/>
    <property type="project" value="UniProtKB-UniRule"/>
</dbReference>
<dbReference type="GO" id="GO:0004817">
    <property type="term" value="F:cysteine-tRNA ligase activity"/>
    <property type="evidence" value="ECO:0007669"/>
    <property type="project" value="UniProtKB-UniRule"/>
</dbReference>
<dbReference type="GO" id="GO:0008270">
    <property type="term" value="F:zinc ion binding"/>
    <property type="evidence" value="ECO:0007669"/>
    <property type="project" value="UniProtKB-UniRule"/>
</dbReference>
<dbReference type="GO" id="GO:0006423">
    <property type="term" value="P:cysteinyl-tRNA aminoacylation"/>
    <property type="evidence" value="ECO:0007669"/>
    <property type="project" value="UniProtKB-UniRule"/>
</dbReference>
<dbReference type="CDD" id="cd07963">
    <property type="entry name" value="Anticodon_Ia_Cys"/>
    <property type="match status" value="1"/>
</dbReference>
<dbReference type="CDD" id="cd00672">
    <property type="entry name" value="CysRS_core"/>
    <property type="match status" value="1"/>
</dbReference>
<dbReference type="FunFam" id="3.40.50.620:FF:000009">
    <property type="entry name" value="Cysteine--tRNA ligase"/>
    <property type="match status" value="1"/>
</dbReference>
<dbReference type="Gene3D" id="1.20.120.1910">
    <property type="entry name" value="Cysteine-tRNA ligase, C-terminal anti-codon recognition domain"/>
    <property type="match status" value="1"/>
</dbReference>
<dbReference type="Gene3D" id="3.40.50.620">
    <property type="entry name" value="HUPs"/>
    <property type="match status" value="1"/>
</dbReference>
<dbReference type="HAMAP" id="MF_00041">
    <property type="entry name" value="Cys_tRNA_synth"/>
    <property type="match status" value="1"/>
</dbReference>
<dbReference type="InterPro" id="IPR015803">
    <property type="entry name" value="Cys-tRNA-ligase"/>
</dbReference>
<dbReference type="InterPro" id="IPR015273">
    <property type="entry name" value="Cys-tRNA-synt_Ia_DALR"/>
</dbReference>
<dbReference type="InterPro" id="IPR024909">
    <property type="entry name" value="Cys-tRNA/MSH_ligase"/>
</dbReference>
<dbReference type="InterPro" id="IPR056411">
    <property type="entry name" value="CysS_C"/>
</dbReference>
<dbReference type="InterPro" id="IPR014729">
    <property type="entry name" value="Rossmann-like_a/b/a_fold"/>
</dbReference>
<dbReference type="InterPro" id="IPR032678">
    <property type="entry name" value="tRNA-synt_1_cat_dom"/>
</dbReference>
<dbReference type="InterPro" id="IPR009080">
    <property type="entry name" value="tRNAsynth_Ia_anticodon-bd"/>
</dbReference>
<dbReference type="NCBIfam" id="TIGR00435">
    <property type="entry name" value="cysS"/>
    <property type="match status" value="1"/>
</dbReference>
<dbReference type="PANTHER" id="PTHR10890:SF3">
    <property type="entry name" value="CYSTEINE--TRNA LIGASE, CYTOPLASMIC"/>
    <property type="match status" value="1"/>
</dbReference>
<dbReference type="PANTHER" id="PTHR10890">
    <property type="entry name" value="CYSTEINYL-TRNA SYNTHETASE"/>
    <property type="match status" value="1"/>
</dbReference>
<dbReference type="Pfam" id="PF23493">
    <property type="entry name" value="CysS_C"/>
    <property type="match status" value="1"/>
</dbReference>
<dbReference type="Pfam" id="PF09190">
    <property type="entry name" value="DALR_2"/>
    <property type="match status" value="1"/>
</dbReference>
<dbReference type="Pfam" id="PF01406">
    <property type="entry name" value="tRNA-synt_1e"/>
    <property type="match status" value="1"/>
</dbReference>
<dbReference type="PRINTS" id="PR00983">
    <property type="entry name" value="TRNASYNTHCYS"/>
</dbReference>
<dbReference type="SMART" id="SM00840">
    <property type="entry name" value="DALR_2"/>
    <property type="match status" value="1"/>
</dbReference>
<dbReference type="SUPFAM" id="SSF47323">
    <property type="entry name" value="Anticodon-binding domain of a subclass of class I aminoacyl-tRNA synthetases"/>
    <property type="match status" value="1"/>
</dbReference>
<dbReference type="SUPFAM" id="SSF52374">
    <property type="entry name" value="Nucleotidylyl transferase"/>
    <property type="match status" value="1"/>
</dbReference>
<proteinExistence type="inferred from homology"/>
<keyword id="KW-0030">Aminoacyl-tRNA synthetase</keyword>
<keyword id="KW-0067">ATP-binding</keyword>
<keyword id="KW-0963">Cytoplasm</keyword>
<keyword id="KW-0436">Ligase</keyword>
<keyword id="KW-0479">Metal-binding</keyword>
<keyword id="KW-0547">Nucleotide-binding</keyword>
<keyword id="KW-0648">Protein biosynthesis</keyword>
<keyword id="KW-0862">Zinc</keyword>
<accession>A3NB50</accession>
<evidence type="ECO:0000255" key="1">
    <source>
        <dbReference type="HAMAP-Rule" id="MF_00041"/>
    </source>
</evidence>
<organism>
    <name type="scientific">Burkholderia pseudomallei (strain 668)</name>
    <dbReference type="NCBI Taxonomy" id="320373"/>
    <lineage>
        <taxon>Bacteria</taxon>
        <taxon>Pseudomonadati</taxon>
        <taxon>Pseudomonadota</taxon>
        <taxon>Betaproteobacteria</taxon>
        <taxon>Burkholderiales</taxon>
        <taxon>Burkholderiaceae</taxon>
        <taxon>Burkholderia</taxon>
        <taxon>pseudomallei group</taxon>
    </lineage>
</organism>
<comment type="catalytic activity">
    <reaction evidence="1">
        <text>tRNA(Cys) + L-cysteine + ATP = L-cysteinyl-tRNA(Cys) + AMP + diphosphate</text>
        <dbReference type="Rhea" id="RHEA:17773"/>
        <dbReference type="Rhea" id="RHEA-COMP:9661"/>
        <dbReference type="Rhea" id="RHEA-COMP:9679"/>
        <dbReference type="ChEBI" id="CHEBI:30616"/>
        <dbReference type="ChEBI" id="CHEBI:33019"/>
        <dbReference type="ChEBI" id="CHEBI:35235"/>
        <dbReference type="ChEBI" id="CHEBI:78442"/>
        <dbReference type="ChEBI" id="CHEBI:78517"/>
        <dbReference type="ChEBI" id="CHEBI:456215"/>
        <dbReference type="EC" id="6.1.1.16"/>
    </reaction>
</comment>
<comment type="cofactor">
    <cofactor evidence="1">
        <name>Zn(2+)</name>
        <dbReference type="ChEBI" id="CHEBI:29105"/>
    </cofactor>
    <text evidence="1">Binds 1 zinc ion per subunit.</text>
</comment>
<comment type="subunit">
    <text evidence="1">Monomer.</text>
</comment>
<comment type="subcellular location">
    <subcellularLocation>
        <location evidence="1">Cytoplasm</location>
    </subcellularLocation>
</comment>
<comment type="similarity">
    <text evidence="1">Belongs to the class-I aminoacyl-tRNA synthetase family.</text>
</comment>